<dbReference type="EC" id="6.1.1.4" evidence="1"/>
<dbReference type="EMBL" id="CP000099">
    <property type="protein sequence ID" value="AAZ70982.1"/>
    <property type="molecule type" value="Genomic_DNA"/>
</dbReference>
<dbReference type="SMR" id="Q46AW0"/>
<dbReference type="STRING" id="269797.Mbar_A2048"/>
<dbReference type="PaxDb" id="269797-Mbar_A2048"/>
<dbReference type="KEGG" id="mba:Mbar_A2048"/>
<dbReference type="eggNOG" id="arCOG00809">
    <property type="taxonomic scope" value="Archaea"/>
</dbReference>
<dbReference type="HOGENOM" id="CLU_004174_0_0_2"/>
<dbReference type="OrthoDB" id="23906at2157"/>
<dbReference type="GO" id="GO:0005737">
    <property type="term" value="C:cytoplasm"/>
    <property type="evidence" value="ECO:0007669"/>
    <property type="project" value="UniProtKB-SubCell"/>
</dbReference>
<dbReference type="GO" id="GO:0002161">
    <property type="term" value="F:aminoacyl-tRNA deacylase activity"/>
    <property type="evidence" value="ECO:0007669"/>
    <property type="project" value="InterPro"/>
</dbReference>
<dbReference type="GO" id="GO:0005524">
    <property type="term" value="F:ATP binding"/>
    <property type="evidence" value="ECO:0007669"/>
    <property type="project" value="UniProtKB-UniRule"/>
</dbReference>
<dbReference type="GO" id="GO:0004823">
    <property type="term" value="F:leucine-tRNA ligase activity"/>
    <property type="evidence" value="ECO:0007669"/>
    <property type="project" value="UniProtKB-UniRule"/>
</dbReference>
<dbReference type="GO" id="GO:0006429">
    <property type="term" value="P:leucyl-tRNA aminoacylation"/>
    <property type="evidence" value="ECO:0007669"/>
    <property type="project" value="UniProtKB-UniRule"/>
</dbReference>
<dbReference type="CDD" id="cd07959">
    <property type="entry name" value="Anticodon_Ia_Leu_AEc"/>
    <property type="match status" value="1"/>
</dbReference>
<dbReference type="CDD" id="cd00812">
    <property type="entry name" value="LeuRS_core"/>
    <property type="match status" value="1"/>
</dbReference>
<dbReference type="FunFam" id="1.10.730.10:FF:000051">
    <property type="entry name" value="Leucine--tRNA ligase"/>
    <property type="match status" value="1"/>
</dbReference>
<dbReference type="FunFam" id="3.90.740.10:FF:000024">
    <property type="entry name" value="Leucine--tRNA ligase"/>
    <property type="match status" value="1"/>
</dbReference>
<dbReference type="Gene3D" id="3.30.2320.20">
    <property type="entry name" value="Class I aminoacyl-tRNA synthetases (RS)"/>
    <property type="match status" value="1"/>
</dbReference>
<dbReference type="Gene3D" id="3.40.50.620">
    <property type="entry name" value="HUPs"/>
    <property type="match status" value="1"/>
</dbReference>
<dbReference type="Gene3D" id="1.10.730.10">
    <property type="entry name" value="Isoleucyl-tRNA Synthetase, Domain 1"/>
    <property type="match status" value="1"/>
</dbReference>
<dbReference type="Gene3D" id="1.10.10.720">
    <property type="entry name" value="leucyl-tRNA synthetase"/>
    <property type="match status" value="1"/>
</dbReference>
<dbReference type="Gene3D" id="3.90.740.10">
    <property type="entry name" value="Valyl/Leucyl/Isoleucyl-tRNA synthetase, editing domain"/>
    <property type="match status" value="1"/>
</dbReference>
<dbReference type="HAMAP" id="MF_00049_A">
    <property type="entry name" value="Leu_tRNA_synth_A"/>
    <property type="match status" value="1"/>
</dbReference>
<dbReference type="InterPro" id="IPR001412">
    <property type="entry name" value="aa-tRNA-synth_I_CS"/>
</dbReference>
<dbReference type="InterPro" id="IPR002300">
    <property type="entry name" value="aa-tRNA-synth_Ia"/>
</dbReference>
<dbReference type="InterPro" id="IPR020791">
    <property type="entry name" value="Leu-tRNA-lgase_arc"/>
</dbReference>
<dbReference type="InterPro" id="IPR004493">
    <property type="entry name" value="Leu-tRNA-synth_Ia_arc/euk"/>
</dbReference>
<dbReference type="InterPro" id="IPR013155">
    <property type="entry name" value="M/V/L/I-tRNA-synth_anticd-bd"/>
</dbReference>
<dbReference type="InterPro" id="IPR014729">
    <property type="entry name" value="Rossmann-like_a/b/a_fold"/>
</dbReference>
<dbReference type="InterPro" id="IPR009080">
    <property type="entry name" value="tRNAsynth_Ia_anticodon-bd"/>
</dbReference>
<dbReference type="InterPro" id="IPR009008">
    <property type="entry name" value="Val/Leu/Ile-tRNA-synth_edit"/>
</dbReference>
<dbReference type="NCBIfam" id="TIGR00395">
    <property type="entry name" value="leuS_arch"/>
    <property type="match status" value="1"/>
</dbReference>
<dbReference type="NCBIfam" id="NF008957">
    <property type="entry name" value="PRK12300.1"/>
    <property type="match status" value="1"/>
</dbReference>
<dbReference type="PANTHER" id="PTHR45794:SF1">
    <property type="entry name" value="LEUCINE--TRNA LIGASE, CYTOPLASMIC"/>
    <property type="match status" value="1"/>
</dbReference>
<dbReference type="PANTHER" id="PTHR45794">
    <property type="entry name" value="LEUCYL-TRNA SYNTHETASE"/>
    <property type="match status" value="1"/>
</dbReference>
<dbReference type="Pfam" id="PF08264">
    <property type="entry name" value="Anticodon_1"/>
    <property type="match status" value="1"/>
</dbReference>
<dbReference type="Pfam" id="PF00133">
    <property type="entry name" value="tRNA-synt_1"/>
    <property type="match status" value="1"/>
</dbReference>
<dbReference type="SUPFAM" id="SSF47323">
    <property type="entry name" value="Anticodon-binding domain of a subclass of class I aminoacyl-tRNA synthetases"/>
    <property type="match status" value="1"/>
</dbReference>
<dbReference type="SUPFAM" id="SSF52374">
    <property type="entry name" value="Nucleotidylyl transferase"/>
    <property type="match status" value="1"/>
</dbReference>
<dbReference type="SUPFAM" id="SSF50677">
    <property type="entry name" value="ValRS/IleRS/LeuRS editing domain"/>
    <property type="match status" value="1"/>
</dbReference>
<dbReference type="PROSITE" id="PS00178">
    <property type="entry name" value="AA_TRNA_LIGASE_I"/>
    <property type="match status" value="1"/>
</dbReference>
<evidence type="ECO:0000255" key="1">
    <source>
        <dbReference type="HAMAP-Rule" id="MF_00049"/>
    </source>
</evidence>
<proteinExistence type="inferred from homology"/>
<keyword id="KW-0030">Aminoacyl-tRNA synthetase</keyword>
<keyword id="KW-0067">ATP-binding</keyword>
<keyword id="KW-0963">Cytoplasm</keyword>
<keyword id="KW-0436">Ligase</keyword>
<keyword id="KW-0547">Nucleotide-binding</keyword>
<keyword id="KW-0648">Protein biosynthesis</keyword>
<feature type="chain" id="PRO_1000009370" description="Leucine--tRNA ligase">
    <location>
        <begin position="1"/>
        <end position="966"/>
    </location>
</feature>
<feature type="short sequence motif" description="'HIGH' region">
    <location>
        <begin position="41"/>
        <end position="51"/>
    </location>
</feature>
<feature type="short sequence motif" description="'KMSKS' region">
    <location>
        <begin position="632"/>
        <end position="636"/>
    </location>
</feature>
<feature type="binding site" evidence="1">
    <location>
        <position position="635"/>
    </location>
    <ligand>
        <name>ATP</name>
        <dbReference type="ChEBI" id="CHEBI:30616"/>
    </ligand>
</feature>
<comment type="catalytic activity">
    <reaction evidence="1">
        <text>tRNA(Leu) + L-leucine + ATP = L-leucyl-tRNA(Leu) + AMP + diphosphate</text>
        <dbReference type="Rhea" id="RHEA:11688"/>
        <dbReference type="Rhea" id="RHEA-COMP:9613"/>
        <dbReference type="Rhea" id="RHEA-COMP:9622"/>
        <dbReference type="ChEBI" id="CHEBI:30616"/>
        <dbReference type="ChEBI" id="CHEBI:33019"/>
        <dbReference type="ChEBI" id="CHEBI:57427"/>
        <dbReference type="ChEBI" id="CHEBI:78442"/>
        <dbReference type="ChEBI" id="CHEBI:78494"/>
        <dbReference type="ChEBI" id="CHEBI:456215"/>
        <dbReference type="EC" id="6.1.1.4"/>
    </reaction>
</comment>
<comment type="subcellular location">
    <subcellularLocation>
        <location evidence="1">Cytoplasm</location>
    </subcellularLocation>
</comment>
<comment type="similarity">
    <text evidence="1">Belongs to the class-I aminoacyl-tRNA synthetase family.</text>
</comment>
<gene>
    <name evidence="1" type="primary">leuS</name>
    <name type="ordered locus">Mbar_A2048</name>
</gene>
<organism>
    <name type="scientific">Methanosarcina barkeri (strain Fusaro / DSM 804)</name>
    <dbReference type="NCBI Taxonomy" id="269797"/>
    <lineage>
        <taxon>Archaea</taxon>
        <taxon>Methanobacteriati</taxon>
        <taxon>Methanobacteriota</taxon>
        <taxon>Stenosarchaea group</taxon>
        <taxon>Methanomicrobia</taxon>
        <taxon>Methanosarcinales</taxon>
        <taxon>Methanosarcinaceae</taxon>
        <taxon>Methanosarcina</taxon>
    </lineage>
</organism>
<name>SYL_METBF</name>
<accession>Q46AW0</accession>
<sequence length="966" mass="111095">MEQDYKPHEIEKKWQKKWDESQIFQAEPDKREKFFITIPYPYLNGNLHAGHTRTFTIGDVVARHKRMLGYNVLYPMGFHVTGTPIVGLAELIANRDPQTMDVYERLHGIPGDILPTLDTPEKIVDYFKRESEKAMRNIGYSIDWRRKFTTTDPTYKKFIEWQYIRLGEKGLIVKGSHPVKWCPNDNNPVEDHDILYGEEATIVEYTLIKFRYKDLVLPCATLRPETTYGVTNLWVNPDVTYVKAKVTLDGNEEFWVVSKEAFRKLTFTDRTVEYIEDVPAKSIIGIKLTNPVTDDEVISLPASFVRPENGSGIVMSVPAHAPFDYLALRDLYDVDLSEYGITEDLRKIKLISLIKVPEFGEFPAKEIVESMGITSQKDPKAEEATKIVYRREFHGGVLKEITGKYEGQAVSKIKDILTRDFISSNTGETFYEFSEPVVCRCGTPCVVNMVKGQWFLNYSNPEWKAKVYKCLAQMRIVPEEYRVEFENKIDWLKDKACARRKGLGTHLPFDKEWLIESLGDSTIYMSYYIIARFIENGELKIENLTLSFFDYVLLGKGDSAAASADTGLSPELLEEIRRHFNYWYPVDLRSSGKDLVPNHLLFFLFHHVALFEEDKWPKALAVNGFVSLEGQKMSKSKGPILTMESAVSKYGADITRMYILSTAEQTQDADWQRTGIESARRQVDRFYSFAKGVIESGKRADLSTELKQIDRWILSRIQNYIRDTNSALYSIQTREAIQNSFFLLQNDVKWYQRRGGETLLYYVLDNWVRLMAPFTPHLCEEIWEAMGHKDPVSLAQYPLYNEGLIDDGAELAEEMIKGTLEDVEEIIRVTKMTPQKVHLYTAPTWKAEAIRCACEMQLECSLEVGNLIKKLMANPDLKRFGKEIPKFVQKIVPEFKSGSSDRYEILTGPDIDEQALLKESISFLEKEIGCSVEVHSADSPAFDPEKKARFAEPLRPAIYIEGKKKE</sequence>
<protein>
    <recommendedName>
        <fullName evidence="1">Leucine--tRNA ligase</fullName>
        <ecNumber evidence="1">6.1.1.4</ecNumber>
    </recommendedName>
    <alternativeName>
        <fullName evidence="1">Leucyl-tRNA synthetase</fullName>
        <shortName evidence="1">LeuRS</shortName>
    </alternativeName>
</protein>
<reference key="1">
    <citation type="journal article" date="2006" name="J. Bacteriol.">
        <title>The Methanosarcina barkeri genome: comparative analysis with Methanosarcina acetivorans and Methanosarcina mazei reveals extensive rearrangement within methanosarcinal genomes.</title>
        <authorList>
            <person name="Maeder D.L."/>
            <person name="Anderson I."/>
            <person name="Brettin T.S."/>
            <person name="Bruce D.C."/>
            <person name="Gilna P."/>
            <person name="Han C.S."/>
            <person name="Lapidus A."/>
            <person name="Metcalf W.W."/>
            <person name="Saunders E."/>
            <person name="Tapia R."/>
            <person name="Sowers K.R."/>
        </authorList>
    </citation>
    <scope>NUCLEOTIDE SEQUENCE [LARGE SCALE GENOMIC DNA]</scope>
    <source>
        <strain>Fusaro / DSM 804</strain>
    </source>
</reference>